<gene>
    <name evidence="1" type="primary">panB</name>
    <name type="ordered locus">RSc2630</name>
    <name type="ORF">RS00934</name>
</gene>
<accession>Q8XW45</accession>
<proteinExistence type="inferred from homology"/>
<sequence>MSSYLQESTRKAVTVTSLQGMRAAGERIAMLTAYDASFAALMERSGVDVVLVGDSLGNVVQGQKTTLPVTLDHIVYHTECVARGTTKALLMSDLPFGTYGTPEQAFHSAVRVMQAGAQMVKLEGGEWLAPTLRFLVERSIPVCAHIGLTPQSVHAFGGFKVQGRGDEAAAQLKADALAVQDAGAQMVLMEAIPATLAGEVTRLLAVPTIGIGAGPECSGQVLVMHDMLGVFPGHRPKFVRNFMDGLTTIDAAVTAYVTAVKDGTFPGPEHSFTA</sequence>
<organism>
    <name type="scientific">Ralstonia nicotianae (strain ATCC BAA-1114 / GMI1000)</name>
    <name type="common">Ralstonia solanacearum</name>
    <dbReference type="NCBI Taxonomy" id="267608"/>
    <lineage>
        <taxon>Bacteria</taxon>
        <taxon>Pseudomonadati</taxon>
        <taxon>Pseudomonadota</taxon>
        <taxon>Betaproteobacteria</taxon>
        <taxon>Burkholderiales</taxon>
        <taxon>Burkholderiaceae</taxon>
        <taxon>Ralstonia</taxon>
        <taxon>Ralstonia solanacearum species complex</taxon>
    </lineage>
</organism>
<comment type="function">
    <text evidence="1">Catalyzes the reversible reaction in which hydroxymethyl group from 5,10-methylenetetrahydrofolate is transferred onto alpha-ketoisovalerate to form ketopantoate.</text>
</comment>
<comment type="catalytic activity">
    <reaction evidence="1">
        <text>3-methyl-2-oxobutanoate + (6R)-5,10-methylene-5,6,7,8-tetrahydrofolate + H2O = 2-dehydropantoate + (6S)-5,6,7,8-tetrahydrofolate</text>
        <dbReference type="Rhea" id="RHEA:11824"/>
        <dbReference type="ChEBI" id="CHEBI:11561"/>
        <dbReference type="ChEBI" id="CHEBI:11851"/>
        <dbReference type="ChEBI" id="CHEBI:15377"/>
        <dbReference type="ChEBI" id="CHEBI:15636"/>
        <dbReference type="ChEBI" id="CHEBI:57453"/>
        <dbReference type="EC" id="2.1.2.11"/>
    </reaction>
</comment>
<comment type="cofactor">
    <cofactor evidence="1">
        <name>Mg(2+)</name>
        <dbReference type="ChEBI" id="CHEBI:18420"/>
    </cofactor>
    <text evidence="1">Binds 1 Mg(2+) ion per subunit.</text>
</comment>
<comment type="pathway">
    <text evidence="1">Cofactor biosynthesis; (R)-pantothenate biosynthesis; (R)-pantoate from 3-methyl-2-oxobutanoate: step 1/2.</text>
</comment>
<comment type="subunit">
    <text evidence="1">Homodecamer; pentamer of dimers.</text>
</comment>
<comment type="subcellular location">
    <subcellularLocation>
        <location evidence="1">Cytoplasm</location>
    </subcellularLocation>
</comment>
<comment type="similarity">
    <text evidence="1">Belongs to the PanB family.</text>
</comment>
<feature type="chain" id="PRO_0000184879" description="3-methyl-2-oxobutanoate hydroxymethyltransferase">
    <location>
        <begin position="1"/>
        <end position="274"/>
    </location>
</feature>
<feature type="active site" description="Proton acceptor" evidence="1">
    <location>
        <position position="190"/>
    </location>
</feature>
<feature type="binding site" evidence="1">
    <location>
        <begin position="54"/>
        <end position="55"/>
    </location>
    <ligand>
        <name>3-methyl-2-oxobutanoate</name>
        <dbReference type="ChEBI" id="CHEBI:11851"/>
    </ligand>
</feature>
<feature type="binding site" evidence="1">
    <location>
        <position position="54"/>
    </location>
    <ligand>
        <name>Mg(2+)</name>
        <dbReference type="ChEBI" id="CHEBI:18420"/>
    </ligand>
</feature>
<feature type="binding site" evidence="1">
    <location>
        <position position="93"/>
    </location>
    <ligand>
        <name>3-methyl-2-oxobutanoate</name>
        <dbReference type="ChEBI" id="CHEBI:11851"/>
    </ligand>
</feature>
<feature type="binding site" evidence="1">
    <location>
        <position position="93"/>
    </location>
    <ligand>
        <name>Mg(2+)</name>
        <dbReference type="ChEBI" id="CHEBI:18420"/>
    </ligand>
</feature>
<feature type="binding site" evidence="1">
    <location>
        <position position="121"/>
    </location>
    <ligand>
        <name>3-methyl-2-oxobutanoate</name>
        <dbReference type="ChEBI" id="CHEBI:11851"/>
    </ligand>
</feature>
<feature type="binding site" evidence="1">
    <location>
        <position position="123"/>
    </location>
    <ligand>
        <name>Mg(2+)</name>
        <dbReference type="ChEBI" id="CHEBI:18420"/>
    </ligand>
</feature>
<name>PANB_RALN1</name>
<dbReference type="EC" id="2.1.2.11" evidence="1"/>
<dbReference type="EMBL" id="AL646052">
    <property type="protein sequence ID" value="CAD16337.1"/>
    <property type="molecule type" value="Genomic_DNA"/>
</dbReference>
<dbReference type="RefSeq" id="WP_011002540.1">
    <property type="nucleotide sequence ID" value="NC_003295.1"/>
</dbReference>
<dbReference type="SMR" id="Q8XW45"/>
<dbReference type="STRING" id="267608.RSc2630"/>
<dbReference type="EnsemblBacteria" id="CAD16337">
    <property type="protein sequence ID" value="CAD16337"/>
    <property type="gene ID" value="RSc2630"/>
</dbReference>
<dbReference type="KEGG" id="rso:RSc2630"/>
<dbReference type="eggNOG" id="COG0413">
    <property type="taxonomic scope" value="Bacteria"/>
</dbReference>
<dbReference type="HOGENOM" id="CLU_036645_1_0_4"/>
<dbReference type="UniPathway" id="UPA00028">
    <property type="reaction ID" value="UER00003"/>
</dbReference>
<dbReference type="Proteomes" id="UP000001436">
    <property type="component" value="Chromosome"/>
</dbReference>
<dbReference type="GO" id="GO:0005737">
    <property type="term" value="C:cytoplasm"/>
    <property type="evidence" value="ECO:0007669"/>
    <property type="project" value="UniProtKB-SubCell"/>
</dbReference>
<dbReference type="GO" id="GO:0003864">
    <property type="term" value="F:3-methyl-2-oxobutanoate hydroxymethyltransferase activity"/>
    <property type="evidence" value="ECO:0007669"/>
    <property type="project" value="UniProtKB-UniRule"/>
</dbReference>
<dbReference type="GO" id="GO:0000287">
    <property type="term" value="F:magnesium ion binding"/>
    <property type="evidence" value="ECO:0007669"/>
    <property type="project" value="TreeGrafter"/>
</dbReference>
<dbReference type="GO" id="GO:0015940">
    <property type="term" value="P:pantothenate biosynthetic process"/>
    <property type="evidence" value="ECO:0007669"/>
    <property type="project" value="UniProtKB-UniRule"/>
</dbReference>
<dbReference type="CDD" id="cd06557">
    <property type="entry name" value="KPHMT-like"/>
    <property type="match status" value="1"/>
</dbReference>
<dbReference type="FunFam" id="3.20.20.60:FF:000003">
    <property type="entry name" value="3-methyl-2-oxobutanoate hydroxymethyltransferase"/>
    <property type="match status" value="1"/>
</dbReference>
<dbReference type="Gene3D" id="3.20.20.60">
    <property type="entry name" value="Phosphoenolpyruvate-binding domains"/>
    <property type="match status" value="1"/>
</dbReference>
<dbReference type="HAMAP" id="MF_00156">
    <property type="entry name" value="PanB"/>
    <property type="match status" value="1"/>
</dbReference>
<dbReference type="InterPro" id="IPR003700">
    <property type="entry name" value="Pantoate_hydroxy_MeTrfase"/>
</dbReference>
<dbReference type="InterPro" id="IPR015813">
    <property type="entry name" value="Pyrv/PenolPyrv_kinase-like_dom"/>
</dbReference>
<dbReference type="InterPro" id="IPR040442">
    <property type="entry name" value="Pyrv_kinase-like_dom_sf"/>
</dbReference>
<dbReference type="NCBIfam" id="TIGR00222">
    <property type="entry name" value="panB"/>
    <property type="match status" value="1"/>
</dbReference>
<dbReference type="NCBIfam" id="NF001452">
    <property type="entry name" value="PRK00311.1"/>
    <property type="match status" value="1"/>
</dbReference>
<dbReference type="PANTHER" id="PTHR20881">
    <property type="entry name" value="3-METHYL-2-OXOBUTANOATE HYDROXYMETHYLTRANSFERASE"/>
    <property type="match status" value="1"/>
</dbReference>
<dbReference type="PANTHER" id="PTHR20881:SF0">
    <property type="entry name" value="3-METHYL-2-OXOBUTANOATE HYDROXYMETHYLTRANSFERASE"/>
    <property type="match status" value="1"/>
</dbReference>
<dbReference type="Pfam" id="PF02548">
    <property type="entry name" value="Pantoate_transf"/>
    <property type="match status" value="1"/>
</dbReference>
<dbReference type="PIRSF" id="PIRSF000388">
    <property type="entry name" value="Pantoate_hydroxy_MeTrfase"/>
    <property type="match status" value="1"/>
</dbReference>
<dbReference type="SUPFAM" id="SSF51621">
    <property type="entry name" value="Phosphoenolpyruvate/pyruvate domain"/>
    <property type="match status" value="1"/>
</dbReference>
<protein>
    <recommendedName>
        <fullName evidence="1">3-methyl-2-oxobutanoate hydroxymethyltransferase</fullName>
        <ecNumber evidence="1">2.1.2.11</ecNumber>
    </recommendedName>
    <alternativeName>
        <fullName evidence="1">Ketopantoate hydroxymethyltransferase</fullName>
        <shortName evidence="1">KPHMT</shortName>
    </alternativeName>
</protein>
<reference key="1">
    <citation type="journal article" date="2002" name="Nature">
        <title>Genome sequence of the plant pathogen Ralstonia solanacearum.</title>
        <authorList>
            <person name="Salanoubat M."/>
            <person name="Genin S."/>
            <person name="Artiguenave F."/>
            <person name="Gouzy J."/>
            <person name="Mangenot S."/>
            <person name="Arlat M."/>
            <person name="Billault A."/>
            <person name="Brottier P."/>
            <person name="Camus J.-C."/>
            <person name="Cattolico L."/>
            <person name="Chandler M."/>
            <person name="Choisne N."/>
            <person name="Claudel-Renard C."/>
            <person name="Cunnac S."/>
            <person name="Demange N."/>
            <person name="Gaspin C."/>
            <person name="Lavie M."/>
            <person name="Moisan A."/>
            <person name="Robert C."/>
            <person name="Saurin W."/>
            <person name="Schiex T."/>
            <person name="Siguier P."/>
            <person name="Thebault P."/>
            <person name="Whalen M."/>
            <person name="Wincker P."/>
            <person name="Levy M."/>
            <person name="Weissenbach J."/>
            <person name="Boucher C.A."/>
        </authorList>
    </citation>
    <scope>NUCLEOTIDE SEQUENCE [LARGE SCALE GENOMIC DNA]</scope>
    <source>
        <strain>ATCC BAA-1114 / GMI1000</strain>
    </source>
</reference>
<keyword id="KW-0963">Cytoplasm</keyword>
<keyword id="KW-0460">Magnesium</keyword>
<keyword id="KW-0479">Metal-binding</keyword>
<keyword id="KW-0566">Pantothenate biosynthesis</keyword>
<keyword id="KW-1185">Reference proteome</keyword>
<keyword id="KW-0808">Transferase</keyword>
<evidence type="ECO:0000255" key="1">
    <source>
        <dbReference type="HAMAP-Rule" id="MF_00156"/>
    </source>
</evidence>